<feature type="chain" id="PRO_0000307513" description="Triosephosphate isomerase">
    <location>
        <begin position="1"/>
        <end position="242"/>
    </location>
</feature>
<feature type="active site" description="Electrophile" evidence="1">
    <location>
        <position position="99"/>
    </location>
</feature>
<feature type="active site" description="Proton acceptor" evidence="1">
    <location>
        <position position="169"/>
    </location>
</feature>
<feature type="binding site" evidence="1">
    <location>
        <begin position="9"/>
        <end position="11"/>
    </location>
    <ligand>
        <name>substrate</name>
    </ligand>
</feature>
<feature type="binding site" evidence="1">
    <location>
        <position position="175"/>
    </location>
    <ligand>
        <name>substrate</name>
    </ligand>
</feature>
<feature type="binding site" evidence="1">
    <location>
        <position position="207"/>
    </location>
    <ligand>
        <name>substrate</name>
    </ligand>
</feature>
<feature type="binding site" evidence="1">
    <location>
        <begin position="228"/>
        <end position="229"/>
    </location>
    <ligand>
        <name>substrate</name>
    </ligand>
</feature>
<gene>
    <name evidence="1" type="primary">tpiA</name>
    <name type="ordered locus">MMOB4190</name>
</gene>
<evidence type="ECO:0000255" key="1">
    <source>
        <dbReference type="HAMAP-Rule" id="MF_00147"/>
    </source>
</evidence>
<name>TPIS_MYCM1</name>
<reference key="1">
    <citation type="journal article" date="2004" name="Genome Res.">
        <title>The complete genome and proteome of Mycoplasma mobile.</title>
        <authorList>
            <person name="Jaffe J.D."/>
            <person name="Stange-Thomann N."/>
            <person name="Smith C."/>
            <person name="DeCaprio D."/>
            <person name="Fisher S."/>
            <person name="Butler J."/>
            <person name="Calvo S."/>
            <person name="Elkins T."/>
            <person name="FitzGerald M.G."/>
            <person name="Hafez N."/>
            <person name="Kodira C.D."/>
            <person name="Major J."/>
            <person name="Wang S."/>
            <person name="Wilkinson J."/>
            <person name="Nicol R."/>
            <person name="Nusbaum C."/>
            <person name="Birren B."/>
            <person name="Berg H.C."/>
            <person name="Church G.M."/>
        </authorList>
    </citation>
    <scope>NUCLEOTIDE SEQUENCE [LARGE SCALE GENOMIC DNA]</scope>
    <source>
        <strain>ATCC 43663 / NCTC 11711 / 163 K</strain>
    </source>
</reference>
<organism>
    <name type="scientific">Mycoplasma mobile (strain ATCC 43663 / 163K / NCTC 11711)</name>
    <name type="common">Mesomycoplasma mobile</name>
    <dbReference type="NCBI Taxonomy" id="267748"/>
    <lineage>
        <taxon>Bacteria</taxon>
        <taxon>Bacillati</taxon>
        <taxon>Mycoplasmatota</taxon>
        <taxon>Mycoplasmoidales</taxon>
        <taxon>Metamycoplasmataceae</taxon>
        <taxon>Mesomycoplasma</taxon>
    </lineage>
</organism>
<protein>
    <recommendedName>
        <fullName evidence="1">Triosephosphate isomerase</fullName>
        <shortName evidence="1">TIM</shortName>
        <shortName evidence="1">TPI</shortName>
        <ecNumber evidence="1">5.3.1.1</ecNumber>
    </recommendedName>
    <alternativeName>
        <fullName evidence="1">Triose-phosphate isomerase</fullName>
    </alternativeName>
</protein>
<comment type="function">
    <text evidence="1">Involved in the gluconeogenesis. Catalyzes stereospecifically the conversion of dihydroxyacetone phosphate (DHAP) to D-glyceraldehyde-3-phosphate (G3P).</text>
</comment>
<comment type="catalytic activity">
    <reaction evidence="1">
        <text>D-glyceraldehyde 3-phosphate = dihydroxyacetone phosphate</text>
        <dbReference type="Rhea" id="RHEA:18585"/>
        <dbReference type="ChEBI" id="CHEBI:57642"/>
        <dbReference type="ChEBI" id="CHEBI:59776"/>
        <dbReference type="EC" id="5.3.1.1"/>
    </reaction>
</comment>
<comment type="pathway">
    <text evidence="1">Carbohydrate biosynthesis; gluconeogenesis.</text>
</comment>
<comment type="pathway">
    <text evidence="1">Carbohydrate degradation; glycolysis; D-glyceraldehyde 3-phosphate from glycerone phosphate: step 1/1.</text>
</comment>
<comment type="subunit">
    <text evidence="1">Homodimer.</text>
</comment>
<comment type="subcellular location">
    <subcellularLocation>
        <location evidence="1">Cytoplasm</location>
    </subcellularLocation>
</comment>
<comment type="similarity">
    <text evidence="1">Belongs to the triosephosphate isomerase family.</text>
</comment>
<proteinExistence type="inferred from homology"/>
<sequence>MRKKIIIGNWKMNKTKTEAENFVKEFNKITSELNLKLDKNLVAGLALPFTSLGIKKEGNFANLVIAAQNFHQNNSGAFTGEISAEMLLDLGVKMVVLGHSERREFFHETDEIVNMKMHQAIKNNLVPIVCVGETELQYNSNKSKEVIKNQIEKSLKNLSDFSKIIIAYEPIWAIGTGKTATVEYAQEMCKYIRSLTNEKTIIQYGGSVKPNNIKELLSQKDIDGALVGGASLNVKDFIDLIK</sequence>
<accession>Q6KHM5</accession>
<dbReference type="EC" id="5.3.1.1" evidence="1"/>
<dbReference type="EMBL" id="AE017308">
    <property type="protein sequence ID" value="AAT27905.1"/>
    <property type="molecule type" value="Genomic_DNA"/>
</dbReference>
<dbReference type="RefSeq" id="WP_011264939.1">
    <property type="nucleotide sequence ID" value="NC_006908.1"/>
</dbReference>
<dbReference type="SMR" id="Q6KHM5"/>
<dbReference type="STRING" id="267748.MMOB4190"/>
<dbReference type="KEGG" id="mmo:MMOB4190"/>
<dbReference type="eggNOG" id="COG0149">
    <property type="taxonomic scope" value="Bacteria"/>
</dbReference>
<dbReference type="HOGENOM" id="CLU_024251_2_3_14"/>
<dbReference type="OrthoDB" id="9809429at2"/>
<dbReference type="UniPathway" id="UPA00109">
    <property type="reaction ID" value="UER00189"/>
</dbReference>
<dbReference type="UniPathway" id="UPA00138"/>
<dbReference type="Proteomes" id="UP000009072">
    <property type="component" value="Chromosome"/>
</dbReference>
<dbReference type="GO" id="GO:0005829">
    <property type="term" value="C:cytosol"/>
    <property type="evidence" value="ECO:0007669"/>
    <property type="project" value="TreeGrafter"/>
</dbReference>
<dbReference type="GO" id="GO:0004807">
    <property type="term" value="F:triose-phosphate isomerase activity"/>
    <property type="evidence" value="ECO:0007669"/>
    <property type="project" value="UniProtKB-UniRule"/>
</dbReference>
<dbReference type="GO" id="GO:0006094">
    <property type="term" value="P:gluconeogenesis"/>
    <property type="evidence" value="ECO:0007669"/>
    <property type="project" value="UniProtKB-UniRule"/>
</dbReference>
<dbReference type="GO" id="GO:0046166">
    <property type="term" value="P:glyceraldehyde-3-phosphate biosynthetic process"/>
    <property type="evidence" value="ECO:0007669"/>
    <property type="project" value="TreeGrafter"/>
</dbReference>
<dbReference type="GO" id="GO:0019563">
    <property type="term" value="P:glycerol catabolic process"/>
    <property type="evidence" value="ECO:0007669"/>
    <property type="project" value="TreeGrafter"/>
</dbReference>
<dbReference type="GO" id="GO:0006096">
    <property type="term" value="P:glycolytic process"/>
    <property type="evidence" value="ECO:0007669"/>
    <property type="project" value="UniProtKB-UniRule"/>
</dbReference>
<dbReference type="CDD" id="cd00311">
    <property type="entry name" value="TIM"/>
    <property type="match status" value="1"/>
</dbReference>
<dbReference type="FunFam" id="3.20.20.70:FF:000016">
    <property type="entry name" value="Triosephosphate isomerase"/>
    <property type="match status" value="1"/>
</dbReference>
<dbReference type="Gene3D" id="3.20.20.70">
    <property type="entry name" value="Aldolase class I"/>
    <property type="match status" value="1"/>
</dbReference>
<dbReference type="HAMAP" id="MF_00147_B">
    <property type="entry name" value="TIM_B"/>
    <property type="match status" value="1"/>
</dbReference>
<dbReference type="InterPro" id="IPR013785">
    <property type="entry name" value="Aldolase_TIM"/>
</dbReference>
<dbReference type="InterPro" id="IPR035990">
    <property type="entry name" value="TIM_sf"/>
</dbReference>
<dbReference type="InterPro" id="IPR022896">
    <property type="entry name" value="TrioseP_Isoase_bac/euk"/>
</dbReference>
<dbReference type="InterPro" id="IPR000652">
    <property type="entry name" value="Triosephosphate_isomerase"/>
</dbReference>
<dbReference type="InterPro" id="IPR020861">
    <property type="entry name" value="Triosephosphate_isomerase_AS"/>
</dbReference>
<dbReference type="NCBIfam" id="TIGR00419">
    <property type="entry name" value="tim"/>
    <property type="match status" value="1"/>
</dbReference>
<dbReference type="PANTHER" id="PTHR21139">
    <property type="entry name" value="TRIOSEPHOSPHATE ISOMERASE"/>
    <property type="match status" value="1"/>
</dbReference>
<dbReference type="PANTHER" id="PTHR21139:SF42">
    <property type="entry name" value="TRIOSEPHOSPHATE ISOMERASE"/>
    <property type="match status" value="1"/>
</dbReference>
<dbReference type="Pfam" id="PF00121">
    <property type="entry name" value="TIM"/>
    <property type="match status" value="1"/>
</dbReference>
<dbReference type="SUPFAM" id="SSF51351">
    <property type="entry name" value="Triosephosphate isomerase (TIM)"/>
    <property type="match status" value="1"/>
</dbReference>
<dbReference type="PROSITE" id="PS00171">
    <property type="entry name" value="TIM_1"/>
    <property type="match status" value="1"/>
</dbReference>
<dbReference type="PROSITE" id="PS51440">
    <property type="entry name" value="TIM_2"/>
    <property type="match status" value="1"/>
</dbReference>
<keyword id="KW-0963">Cytoplasm</keyword>
<keyword id="KW-0312">Gluconeogenesis</keyword>
<keyword id="KW-0324">Glycolysis</keyword>
<keyword id="KW-0413">Isomerase</keyword>
<keyword id="KW-1185">Reference proteome</keyword>